<accession>B7MNK3</accession>
<comment type="function">
    <text evidence="1">Phosphatase that hydrolyzes non-canonical purine nucleotides such as XTP and ITP to their respective diphosphate derivatives. Probably excludes non-canonical purines from DNA/RNA precursor pool, thus preventing their incorporation into DNA/RNA and avoiding chromosomal lesions.</text>
</comment>
<comment type="catalytic activity">
    <reaction evidence="1">
        <text>XTP + H2O = XDP + phosphate + H(+)</text>
        <dbReference type="Rhea" id="RHEA:28406"/>
        <dbReference type="ChEBI" id="CHEBI:15377"/>
        <dbReference type="ChEBI" id="CHEBI:15378"/>
        <dbReference type="ChEBI" id="CHEBI:43474"/>
        <dbReference type="ChEBI" id="CHEBI:59884"/>
        <dbReference type="ChEBI" id="CHEBI:61314"/>
        <dbReference type="EC" id="3.6.1.73"/>
    </reaction>
</comment>
<comment type="catalytic activity">
    <reaction evidence="1">
        <text>ITP + H2O = IDP + phosphate + H(+)</text>
        <dbReference type="Rhea" id="RHEA:28330"/>
        <dbReference type="ChEBI" id="CHEBI:15377"/>
        <dbReference type="ChEBI" id="CHEBI:15378"/>
        <dbReference type="ChEBI" id="CHEBI:43474"/>
        <dbReference type="ChEBI" id="CHEBI:58280"/>
        <dbReference type="ChEBI" id="CHEBI:61402"/>
        <dbReference type="EC" id="3.6.1.73"/>
    </reaction>
</comment>
<comment type="cofactor">
    <cofactor evidence="1">
        <name>Mg(2+)</name>
        <dbReference type="ChEBI" id="CHEBI:18420"/>
    </cofactor>
    <cofactor evidence="1">
        <name>Mn(2+)</name>
        <dbReference type="ChEBI" id="CHEBI:29035"/>
    </cofactor>
    <text evidence="1">Binds 1 divalent metal cation per subunit; can use either Mg(2+) or Mn(2+).</text>
</comment>
<comment type="subunit">
    <text evidence="1">Homodimer.</text>
</comment>
<comment type="similarity">
    <text evidence="1">Belongs to the YjjX NTPase family.</text>
</comment>
<proteinExistence type="inferred from homology"/>
<keyword id="KW-0378">Hydrolase</keyword>
<keyword id="KW-0460">Magnesium</keyword>
<keyword id="KW-0464">Manganese</keyword>
<keyword id="KW-0479">Metal-binding</keyword>
<keyword id="KW-0546">Nucleotide metabolism</keyword>
<keyword id="KW-0547">Nucleotide-binding</keyword>
<keyword id="KW-1185">Reference proteome</keyword>
<reference key="1">
    <citation type="journal article" date="2009" name="PLoS Genet.">
        <title>Organised genome dynamics in the Escherichia coli species results in highly diverse adaptive paths.</title>
        <authorList>
            <person name="Touchon M."/>
            <person name="Hoede C."/>
            <person name="Tenaillon O."/>
            <person name="Barbe V."/>
            <person name="Baeriswyl S."/>
            <person name="Bidet P."/>
            <person name="Bingen E."/>
            <person name="Bonacorsi S."/>
            <person name="Bouchier C."/>
            <person name="Bouvet O."/>
            <person name="Calteau A."/>
            <person name="Chiapello H."/>
            <person name="Clermont O."/>
            <person name="Cruveiller S."/>
            <person name="Danchin A."/>
            <person name="Diard M."/>
            <person name="Dossat C."/>
            <person name="Karoui M.E."/>
            <person name="Frapy E."/>
            <person name="Garry L."/>
            <person name="Ghigo J.M."/>
            <person name="Gilles A.M."/>
            <person name="Johnson J."/>
            <person name="Le Bouguenec C."/>
            <person name="Lescat M."/>
            <person name="Mangenot S."/>
            <person name="Martinez-Jehanne V."/>
            <person name="Matic I."/>
            <person name="Nassif X."/>
            <person name="Oztas S."/>
            <person name="Petit M.A."/>
            <person name="Pichon C."/>
            <person name="Rouy Z."/>
            <person name="Ruf C.S."/>
            <person name="Schneider D."/>
            <person name="Tourret J."/>
            <person name="Vacherie B."/>
            <person name="Vallenet D."/>
            <person name="Medigue C."/>
            <person name="Rocha E.P.C."/>
            <person name="Denamur E."/>
        </authorList>
    </citation>
    <scope>NUCLEOTIDE SEQUENCE [LARGE SCALE GENOMIC DNA]</scope>
    <source>
        <strain>S88 / ExPEC</strain>
    </source>
</reference>
<feature type="chain" id="PRO_1000130935" description="Inosine/xanthosine triphosphatase">
    <location>
        <begin position="1"/>
        <end position="175"/>
    </location>
</feature>
<feature type="binding site" evidence="1">
    <location>
        <begin position="8"/>
        <end position="13"/>
    </location>
    <ligand>
        <name>substrate</name>
    </ligand>
</feature>
<feature type="binding site" evidence="1">
    <location>
        <position position="38"/>
    </location>
    <ligand>
        <name>Mg(2+)</name>
        <dbReference type="ChEBI" id="CHEBI:18420"/>
    </ligand>
</feature>
<feature type="binding site" evidence="1">
    <location>
        <begin position="68"/>
        <end position="69"/>
    </location>
    <ligand>
        <name>substrate</name>
    </ligand>
</feature>
<feature type="binding site" evidence="1">
    <location>
        <position position="68"/>
    </location>
    <ligand>
        <name>Mg(2+)</name>
        <dbReference type="ChEBI" id="CHEBI:18420"/>
    </ligand>
</feature>
<gene>
    <name type="primary">yjjX</name>
    <name type="ordered locus">ECS88_5077</name>
</gene>
<organism>
    <name type="scientific">Escherichia coli O45:K1 (strain S88 / ExPEC)</name>
    <dbReference type="NCBI Taxonomy" id="585035"/>
    <lineage>
        <taxon>Bacteria</taxon>
        <taxon>Pseudomonadati</taxon>
        <taxon>Pseudomonadota</taxon>
        <taxon>Gammaproteobacteria</taxon>
        <taxon>Enterobacterales</taxon>
        <taxon>Enterobacteriaceae</taxon>
        <taxon>Escherichia</taxon>
    </lineage>
</organism>
<sequence length="175" mass="18810">MHQVVCATTNPAKIQAILQAFHEIFGEGSCHIASVAVESGVPEQPFGSEETRAGARNRVANARRLLPEADFWVAIEAGIDGDSTFSWVVIENTSQRGEARSATLPLPAVILEKVREGEALGPVMSRYTGIDEIGRKEGAIGVFTAGKLTRTSVYHQAVILALSPFHNAVYQPLQA</sequence>
<protein>
    <recommendedName>
        <fullName evidence="1">Inosine/xanthosine triphosphatase</fullName>
        <shortName evidence="1">ITPase/XTPase</shortName>
        <ecNumber evidence="1">3.6.1.73</ecNumber>
    </recommendedName>
    <alternativeName>
        <fullName evidence="1">Non-canonical purine NTP phosphatase</fullName>
    </alternativeName>
    <alternativeName>
        <fullName evidence="1">Non-standard purine NTP phosphatase</fullName>
    </alternativeName>
    <alternativeName>
        <fullName evidence="1">Nucleoside-triphosphate phosphatase</fullName>
        <shortName evidence="1">NTPase</shortName>
    </alternativeName>
</protein>
<dbReference type="EC" id="3.6.1.73" evidence="1"/>
<dbReference type="EMBL" id="CU928161">
    <property type="protein sequence ID" value="CAR06216.1"/>
    <property type="molecule type" value="Genomic_DNA"/>
</dbReference>
<dbReference type="RefSeq" id="WP_001339518.1">
    <property type="nucleotide sequence ID" value="NC_011742.1"/>
</dbReference>
<dbReference type="SMR" id="B7MNK3"/>
<dbReference type="KEGG" id="ecz:ECS88_5077"/>
<dbReference type="HOGENOM" id="CLU_087417_1_0_6"/>
<dbReference type="Proteomes" id="UP000000747">
    <property type="component" value="Chromosome"/>
</dbReference>
<dbReference type="GO" id="GO:0103023">
    <property type="term" value="F:ITPase activity"/>
    <property type="evidence" value="ECO:0007669"/>
    <property type="project" value="UniProtKB-EC"/>
</dbReference>
<dbReference type="GO" id="GO:0046872">
    <property type="term" value="F:metal ion binding"/>
    <property type="evidence" value="ECO:0007669"/>
    <property type="project" value="UniProtKB-KW"/>
</dbReference>
<dbReference type="GO" id="GO:0000166">
    <property type="term" value="F:nucleotide binding"/>
    <property type="evidence" value="ECO:0007669"/>
    <property type="project" value="UniProtKB-KW"/>
</dbReference>
<dbReference type="GO" id="GO:0017111">
    <property type="term" value="F:ribonucleoside triphosphate phosphatase activity"/>
    <property type="evidence" value="ECO:0000250"/>
    <property type="project" value="UniProtKB"/>
</dbReference>
<dbReference type="GO" id="GO:0009117">
    <property type="term" value="P:nucleotide metabolic process"/>
    <property type="evidence" value="ECO:0007669"/>
    <property type="project" value="UniProtKB-KW"/>
</dbReference>
<dbReference type="GO" id="GO:0006772">
    <property type="term" value="P:thiamine metabolic process"/>
    <property type="evidence" value="ECO:0007669"/>
    <property type="project" value="TreeGrafter"/>
</dbReference>
<dbReference type="FunFam" id="3.90.950.10:FF:000002">
    <property type="entry name" value="Inosine/xanthosine triphosphatase"/>
    <property type="match status" value="1"/>
</dbReference>
<dbReference type="Gene3D" id="3.90.950.10">
    <property type="match status" value="1"/>
</dbReference>
<dbReference type="HAMAP" id="MF_00648">
    <property type="entry name" value="Non_canon_purine_NTPase_YjjX"/>
    <property type="match status" value="1"/>
</dbReference>
<dbReference type="InterPro" id="IPR029001">
    <property type="entry name" value="ITPase-like_fam"/>
</dbReference>
<dbReference type="InterPro" id="IPR002786">
    <property type="entry name" value="Non_canon_purine_NTPase"/>
</dbReference>
<dbReference type="InterPro" id="IPR026533">
    <property type="entry name" value="NTPase/PRRC1"/>
</dbReference>
<dbReference type="InterPro" id="IPR050299">
    <property type="entry name" value="YjjX_NTPase"/>
</dbReference>
<dbReference type="NCBIfam" id="TIGR00258">
    <property type="entry name" value="inosine/xanthosine triphosphatase"/>
    <property type="match status" value="1"/>
</dbReference>
<dbReference type="NCBIfam" id="NF003459">
    <property type="entry name" value="PRK05074.1"/>
    <property type="match status" value="1"/>
</dbReference>
<dbReference type="PANTHER" id="PTHR34699">
    <property type="match status" value="1"/>
</dbReference>
<dbReference type="PANTHER" id="PTHR34699:SF2">
    <property type="entry name" value="NON-CANONICAL PURINE NTP PHOSPHATASE_PRRC1 DOMAIN-CONTAINING PROTEIN"/>
    <property type="match status" value="1"/>
</dbReference>
<dbReference type="Pfam" id="PF01931">
    <property type="entry name" value="NTPase_I-T"/>
    <property type="match status" value="1"/>
</dbReference>
<dbReference type="SUPFAM" id="SSF52972">
    <property type="entry name" value="ITPase-like"/>
    <property type="match status" value="1"/>
</dbReference>
<name>NCPP_ECO45</name>
<evidence type="ECO:0000255" key="1">
    <source>
        <dbReference type="HAMAP-Rule" id="MF_00648"/>
    </source>
</evidence>